<name>YCIB_NITEC</name>
<organism>
    <name type="scientific">Nitrosomonas eutropha (strain DSM 101675 / C91 / Nm57)</name>
    <dbReference type="NCBI Taxonomy" id="335283"/>
    <lineage>
        <taxon>Bacteria</taxon>
        <taxon>Pseudomonadati</taxon>
        <taxon>Pseudomonadota</taxon>
        <taxon>Betaproteobacteria</taxon>
        <taxon>Nitrosomonadales</taxon>
        <taxon>Nitrosomonadaceae</taxon>
        <taxon>Nitrosomonas</taxon>
    </lineage>
</organism>
<proteinExistence type="inferred from homology"/>
<keyword id="KW-0997">Cell inner membrane</keyword>
<keyword id="KW-1003">Cell membrane</keyword>
<keyword id="KW-0472">Membrane</keyword>
<keyword id="KW-0812">Transmembrane</keyword>
<keyword id="KW-1133">Transmembrane helix</keyword>
<sequence>MKFLFDLFPIILFFATYKIYGIYSATAVAIVATFAQIGWVWLRHRKVDNMLWVSLAIIIVFGGATLILQDETFIKWKPTVLYWLFAVILFLAHSFFGKNLIRAMMKDQIKLPEPVWVRLNISWSVFFGAMGALNLYVAYNYSTDTWVNFKLFGFMGLMFVFIILQALLLGKYMEKNDNQKI</sequence>
<feature type="chain" id="PRO_1000021032" description="Inner membrane-spanning protein YciB">
    <location>
        <begin position="1"/>
        <end position="181"/>
    </location>
</feature>
<feature type="transmembrane region" description="Helical" evidence="1">
    <location>
        <begin position="24"/>
        <end position="44"/>
    </location>
</feature>
<feature type="transmembrane region" description="Helical" evidence="1">
    <location>
        <begin position="49"/>
        <end position="69"/>
    </location>
</feature>
<feature type="transmembrane region" description="Helical" evidence="1">
    <location>
        <begin position="81"/>
        <end position="101"/>
    </location>
</feature>
<feature type="transmembrane region" description="Helical" evidence="1">
    <location>
        <begin position="119"/>
        <end position="139"/>
    </location>
</feature>
<feature type="transmembrane region" description="Helical" evidence="1">
    <location>
        <begin position="149"/>
        <end position="169"/>
    </location>
</feature>
<accession>Q0ADQ5</accession>
<gene>
    <name evidence="1" type="primary">yciB</name>
    <name type="ordered locus">Neut_2310</name>
</gene>
<evidence type="ECO:0000255" key="1">
    <source>
        <dbReference type="HAMAP-Rule" id="MF_00189"/>
    </source>
</evidence>
<comment type="function">
    <text evidence="1">Plays a role in cell envelope biogenesis, maintenance of cell envelope integrity and membrane homeostasis.</text>
</comment>
<comment type="subcellular location">
    <subcellularLocation>
        <location evidence="1">Cell inner membrane</location>
        <topology evidence="1">Multi-pass membrane protein</topology>
    </subcellularLocation>
</comment>
<comment type="similarity">
    <text evidence="1">Belongs to the YciB family.</text>
</comment>
<reference key="1">
    <citation type="journal article" date="2007" name="Environ. Microbiol.">
        <title>Whole-genome analysis of the ammonia-oxidizing bacterium, Nitrosomonas eutropha C91: implications for niche adaptation.</title>
        <authorList>
            <person name="Stein L.Y."/>
            <person name="Arp D.J."/>
            <person name="Berube P.M."/>
            <person name="Chain P.S."/>
            <person name="Hauser L."/>
            <person name="Jetten M.S."/>
            <person name="Klotz M.G."/>
            <person name="Larimer F.W."/>
            <person name="Norton J.M."/>
            <person name="Op den Camp H.J.M."/>
            <person name="Shin M."/>
            <person name="Wei X."/>
        </authorList>
    </citation>
    <scope>NUCLEOTIDE SEQUENCE [LARGE SCALE GENOMIC DNA]</scope>
    <source>
        <strain>DSM 101675 / C91 / Nm57</strain>
    </source>
</reference>
<protein>
    <recommendedName>
        <fullName evidence="1">Inner membrane-spanning protein YciB</fullName>
    </recommendedName>
</protein>
<dbReference type="EMBL" id="CP000450">
    <property type="protein sequence ID" value="ABI60527.1"/>
    <property type="molecule type" value="Genomic_DNA"/>
</dbReference>
<dbReference type="RefSeq" id="WP_011635303.1">
    <property type="nucleotide sequence ID" value="NC_008344.1"/>
</dbReference>
<dbReference type="STRING" id="335283.Neut_2310"/>
<dbReference type="KEGG" id="net:Neut_2310"/>
<dbReference type="eggNOG" id="COG2917">
    <property type="taxonomic scope" value="Bacteria"/>
</dbReference>
<dbReference type="HOGENOM" id="CLU_089554_2_0_4"/>
<dbReference type="OrthoDB" id="9788219at2"/>
<dbReference type="Proteomes" id="UP000001966">
    <property type="component" value="Chromosome"/>
</dbReference>
<dbReference type="GO" id="GO:0005886">
    <property type="term" value="C:plasma membrane"/>
    <property type="evidence" value="ECO:0007669"/>
    <property type="project" value="UniProtKB-SubCell"/>
</dbReference>
<dbReference type="HAMAP" id="MF_00189">
    <property type="entry name" value="YciB"/>
    <property type="match status" value="1"/>
</dbReference>
<dbReference type="InterPro" id="IPR006008">
    <property type="entry name" value="YciB"/>
</dbReference>
<dbReference type="NCBIfam" id="TIGR00997">
    <property type="entry name" value="ispZ"/>
    <property type="match status" value="1"/>
</dbReference>
<dbReference type="NCBIfam" id="NF001325">
    <property type="entry name" value="PRK00259.1-3"/>
    <property type="match status" value="1"/>
</dbReference>
<dbReference type="PANTHER" id="PTHR36917:SF1">
    <property type="entry name" value="INNER MEMBRANE-SPANNING PROTEIN YCIB"/>
    <property type="match status" value="1"/>
</dbReference>
<dbReference type="PANTHER" id="PTHR36917">
    <property type="entry name" value="INTRACELLULAR SEPTATION PROTEIN A-RELATED"/>
    <property type="match status" value="1"/>
</dbReference>
<dbReference type="Pfam" id="PF04279">
    <property type="entry name" value="IspA"/>
    <property type="match status" value="1"/>
</dbReference>